<organism>
    <name type="scientific">Xylella fastidiosa (strain Temecula1 / ATCC 700964)</name>
    <dbReference type="NCBI Taxonomy" id="183190"/>
    <lineage>
        <taxon>Bacteria</taxon>
        <taxon>Pseudomonadati</taxon>
        <taxon>Pseudomonadota</taxon>
        <taxon>Gammaproteobacteria</taxon>
        <taxon>Lysobacterales</taxon>
        <taxon>Lysobacteraceae</taxon>
        <taxon>Xylella</taxon>
    </lineage>
</organism>
<reference key="1">
    <citation type="journal article" date="2003" name="J. Bacteriol.">
        <title>Comparative analyses of the complete genome sequences of Pierce's disease and citrus variegated chlorosis strains of Xylella fastidiosa.</title>
        <authorList>
            <person name="Van Sluys M.A."/>
            <person name="de Oliveira M.C."/>
            <person name="Monteiro-Vitorello C.B."/>
            <person name="Miyaki C.Y."/>
            <person name="Furlan L.R."/>
            <person name="Camargo L.E.A."/>
            <person name="da Silva A.C.R."/>
            <person name="Moon D.H."/>
            <person name="Takita M.A."/>
            <person name="Lemos E.G.M."/>
            <person name="Machado M.A."/>
            <person name="Ferro M.I.T."/>
            <person name="da Silva F.R."/>
            <person name="Goldman M.H.S."/>
            <person name="Goldman G.H."/>
            <person name="Lemos M.V.F."/>
            <person name="El-Dorry H."/>
            <person name="Tsai S.M."/>
            <person name="Carrer H."/>
            <person name="Carraro D.M."/>
            <person name="de Oliveira R.C."/>
            <person name="Nunes L.R."/>
            <person name="Siqueira W.J."/>
            <person name="Coutinho L.L."/>
            <person name="Kimura E.T."/>
            <person name="Ferro E.S."/>
            <person name="Harakava R."/>
            <person name="Kuramae E.E."/>
            <person name="Marino C.L."/>
            <person name="Giglioti E."/>
            <person name="Abreu I.L."/>
            <person name="Alves L.M.C."/>
            <person name="do Amaral A.M."/>
            <person name="Baia G.S."/>
            <person name="Blanco S.R."/>
            <person name="Brito M.S."/>
            <person name="Cannavan F.S."/>
            <person name="Celestino A.V."/>
            <person name="da Cunha A.F."/>
            <person name="Fenille R.C."/>
            <person name="Ferro J.A."/>
            <person name="Formighieri E.F."/>
            <person name="Kishi L.T."/>
            <person name="Leoni S.G."/>
            <person name="Oliveira A.R."/>
            <person name="Rosa V.E. Jr."/>
            <person name="Sassaki F.T."/>
            <person name="Sena J.A.D."/>
            <person name="de Souza A.A."/>
            <person name="Truffi D."/>
            <person name="Tsukumo F."/>
            <person name="Yanai G.M."/>
            <person name="Zaros L.G."/>
            <person name="Civerolo E.L."/>
            <person name="Simpson A.J.G."/>
            <person name="Almeida N.F. Jr."/>
            <person name="Setubal J.C."/>
            <person name="Kitajima J.P."/>
        </authorList>
    </citation>
    <scope>NUCLEOTIDE SEQUENCE [LARGE SCALE GENOMIC DNA]</scope>
    <source>
        <strain>Temecula1 / ATCC 700964</strain>
    </source>
</reference>
<name>DCUP_XYLFT</name>
<keyword id="KW-0963">Cytoplasm</keyword>
<keyword id="KW-0210">Decarboxylase</keyword>
<keyword id="KW-0456">Lyase</keyword>
<keyword id="KW-0627">Porphyrin biosynthesis</keyword>
<keyword id="KW-1185">Reference proteome</keyword>
<accession>Q87DV0</accession>
<dbReference type="EC" id="4.1.1.37" evidence="1"/>
<dbReference type="EMBL" id="AE009442">
    <property type="protein sequence ID" value="AAO28453.1"/>
    <property type="molecule type" value="Genomic_DNA"/>
</dbReference>
<dbReference type="RefSeq" id="WP_004090618.1">
    <property type="nucleotide sequence ID" value="NC_004556.1"/>
</dbReference>
<dbReference type="SMR" id="Q87DV0"/>
<dbReference type="GeneID" id="93904295"/>
<dbReference type="KEGG" id="xft:PD_0580"/>
<dbReference type="HOGENOM" id="CLU_040933_0_0_6"/>
<dbReference type="UniPathway" id="UPA00251">
    <property type="reaction ID" value="UER00321"/>
</dbReference>
<dbReference type="Proteomes" id="UP000002516">
    <property type="component" value="Chromosome"/>
</dbReference>
<dbReference type="GO" id="GO:0005829">
    <property type="term" value="C:cytosol"/>
    <property type="evidence" value="ECO:0007669"/>
    <property type="project" value="TreeGrafter"/>
</dbReference>
<dbReference type="GO" id="GO:0004853">
    <property type="term" value="F:uroporphyrinogen decarboxylase activity"/>
    <property type="evidence" value="ECO:0007669"/>
    <property type="project" value="UniProtKB-UniRule"/>
</dbReference>
<dbReference type="GO" id="GO:0019353">
    <property type="term" value="P:protoporphyrinogen IX biosynthetic process from glutamate"/>
    <property type="evidence" value="ECO:0007669"/>
    <property type="project" value="TreeGrafter"/>
</dbReference>
<dbReference type="CDD" id="cd00717">
    <property type="entry name" value="URO-D"/>
    <property type="match status" value="1"/>
</dbReference>
<dbReference type="FunFam" id="3.20.20.210:FF:000001">
    <property type="entry name" value="Uroporphyrinogen decarboxylase"/>
    <property type="match status" value="1"/>
</dbReference>
<dbReference type="Gene3D" id="3.20.20.210">
    <property type="match status" value="1"/>
</dbReference>
<dbReference type="HAMAP" id="MF_00218">
    <property type="entry name" value="URO_D"/>
    <property type="match status" value="1"/>
</dbReference>
<dbReference type="InterPro" id="IPR038071">
    <property type="entry name" value="UROD/MetE-like_sf"/>
</dbReference>
<dbReference type="InterPro" id="IPR006361">
    <property type="entry name" value="Uroporphyrinogen_deCO2ase_HemE"/>
</dbReference>
<dbReference type="InterPro" id="IPR000257">
    <property type="entry name" value="Uroporphyrinogen_deCOase"/>
</dbReference>
<dbReference type="NCBIfam" id="TIGR01464">
    <property type="entry name" value="hemE"/>
    <property type="match status" value="1"/>
</dbReference>
<dbReference type="PANTHER" id="PTHR21091">
    <property type="entry name" value="METHYLTETRAHYDROFOLATE:HOMOCYSTEINE METHYLTRANSFERASE RELATED"/>
    <property type="match status" value="1"/>
</dbReference>
<dbReference type="PANTHER" id="PTHR21091:SF169">
    <property type="entry name" value="UROPORPHYRINOGEN DECARBOXYLASE"/>
    <property type="match status" value="1"/>
</dbReference>
<dbReference type="Pfam" id="PF01208">
    <property type="entry name" value="URO-D"/>
    <property type="match status" value="1"/>
</dbReference>
<dbReference type="SUPFAM" id="SSF51726">
    <property type="entry name" value="UROD/MetE-like"/>
    <property type="match status" value="1"/>
</dbReference>
<dbReference type="PROSITE" id="PS00906">
    <property type="entry name" value="UROD_1"/>
    <property type="match status" value="1"/>
</dbReference>
<dbReference type="PROSITE" id="PS00907">
    <property type="entry name" value="UROD_2"/>
    <property type="match status" value="1"/>
</dbReference>
<proteinExistence type="inferred from homology"/>
<comment type="function">
    <text evidence="1">Catalyzes the decarboxylation of four acetate groups of uroporphyrinogen-III to yield coproporphyrinogen-III.</text>
</comment>
<comment type="catalytic activity">
    <reaction evidence="1">
        <text>uroporphyrinogen III + 4 H(+) = coproporphyrinogen III + 4 CO2</text>
        <dbReference type="Rhea" id="RHEA:19865"/>
        <dbReference type="ChEBI" id="CHEBI:15378"/>
        <dbReference type="ChEBI" id="CHEBI:16526"/>
        <dbReference type="ChEBI" id="CHEBI:57308"/>
        <dbReference type="ChEBI" id="CHEBI:57309"/>
        <dbReference type="EC" id="4.1.1.37"/>
    </reaction>
</comment>
<comment type="pathway">
    <text evidence="1">Porphyrin-containing compound metabolism; protoporphyrin-IX biosynthesis; coproporphyrinogen-III from 5-aminolevulinate: step 4/4.</text>
</comment>
<comment type="subunit">
    <text evidence="1">Homodimer.</text>
</comment>
<comment type="subcellular location">
    <subcellularLocation>
        <location evidence="1">Cytoplasm</location>
    </subcellularLocation>
</comment>
<comment type="similarity">
    <text evidence="1">Belongs to the uroporphyrinogen decarboxylase family.</text>
</comment>
<feature type="chain" id="PRO_0000187665" description="Uroporphyrinogen decarboxylase">
    <location>
        <begin position="1"/>
        <end position="354"/>
    </location>
</feature>
<feature type="binding site" evidence="1">
    <location>
        <begin position="25"/>
        <end position="29"/>
    </location>
    <ligand>
        <name>substrate</name>
    </ligand>
</feature>
<feature type="binding site" evidence="1">
    <location>
        <position position="44"/>
    </location>
    <ligand>
        <name>substrate</name>
    </ligand>
</feature>
<feature type="binding site" evidence="1">
    <location>
        <position position="75"/>
    </location>
    <ligand>
        <name>substrate</name>
    </ligand>
</feature>
<feature type="binding site" evidence="1">
    <location>
        <position position="152"/>
    </location>
    <ligand>
        <name>substrate</name>
    </ligand>
</feature>
<feature type="binding site" evidence="1">
    <location>
        <position position="207"/>
    </location>
    <ligand>
        <name>substrate</name>
    </ligand>
</feature>
<feature type="binding site" evidence="1">
    <location>
        <position position="330"/>
    </location>
    <ligand>
        <name>substrate</name>
    </ligand>
</feature>
<feature type="site" description="Transition state stabilizer" evidence="1">
    <location>
        <position position="75"/>
    </location>
</feature>
<evidence type="ECO:0000255" key="1">
    <source>
        <dbReference type="HAMAP-Rule" id="MF_00218"/>
    </source>
</evidence>
<sequence>MLKNDRLLRALRRDTVDRTPIWLMRQAGRYLPEYRAARQHAGSFLKMAKTPELACEITLQPLRRFPLDAAILFSDILMIPDAMGLELHFIEGEGPRLGKPIRDAAAITQLAVPDMETELRYVMDAVRLIRKELDNSVPLIGFSGSPWTLACYMIEGGSSKEYARIKAMAFNAPDVLHQLLNTVTDAVISYLAAQRAAGAQALQVFDTWGGILSPTMYRTFSLPYLTRIARELERGTGTEHTPLVLFGKGNGPYIAELAMSGTEAVGVDWTIELEDAARRSNGQVALQGNLDPATLYGTPNNIAREVQRTLDSYAAGNGGSREGHVFNLGHGMTPGMNPDHVSALVEAVQRLSRR</sequence>
<protein>
    <recommendedName>
        <fullName evidence="1">Uroporphyrinogen decarboxylase</fullName>
        <shortName evidence="1">UPD</shortName>
        <shortName evidence="1">URO-D</shortName>
        <ecNumber evidence="1">4.1.1.37</ecNumber>
    </recommendedName>
</protein>
<gene>
    <name evidence="1" type="primary">hemE</name>
    <name type="ordered locus">PD_0580</name>
</gene>